<proteinExistence type="inferred from homology"/>
<protein>
    <recommendedName>
        <fullName>Mitogen-activated protein kinase HOG1</fullName>
        <shortName>MAP kinase HOG1</shortName>
        <ecNumber evidence="2">2.7.11.24</ecNumber>
    </recommendedName>
    <alternativeName>
        <fullName>MAP kinase OSC1</fullName>
    </alternativeName>
</protein>
<dbReference type="EC" id="2.7.11.24" evidence="2"/>
<dbReference type="EMBL" id="AB162820">
    <property type="protein sequence ID" value="BAD11137.1"/>
    <property type="molecule type" value="Genomic_DNA"/>
</dbReference>
<dbReference type="EMBL" id="KB725978">
    <property type="protein sequence ID" value="ENH80487.1"/>
    <property type="status" value="ALT_SEQ"/>
    <property type="molecule type" value="Genomic_DNA"/>
</dbReference>
<dbReference type="EMBL" id="AMCV02000001">
    <property type="protein sequence ID" value="TDZ25758.1"/>
    <property type="molecule type" value="Genomic_DNA"/>
</dbReference>
<dbReference type="SMR" id="Q75Q66"/>
<dbReference type="STRING" id="1213857.Q75Q66"/>
<dbReference type="eggNOG" id="KOG0660">
    <property type="taxonomic scope" value="Eukaryota"/>
</dbReference>
<dbReference type="OrthoDB" id="192887at2759"/>
<dbReference type="Proteomes" id="UP000014480">
    <property type="component" value="Unassembled WGS sequence"/>
</dbReference>
<dbReference type="GO" id="GO:0005737">
    <property type="term" value="C:cytoplasm"/>
    <property type="evidence" value="ECO:0007669"/>
    <property type="project" value="UniProtKB-SubCell"/>
</dbReference>
<dbReference type="GO" id="GO:0005634">
    <property type="term" value="C:nucleus"/>
    <property type="evidence" value="ECO:0007669"/>
    <property type="project" value="UniProtKB-SubCell"/>
</dbReference>
<dbReference type="GO" id="GO:0005524">
    <property type="term" value="F:ATP binding"/>
    <property type="evidence" value="ECO:0007669"/>
    <property type="project" value="UniProtKB-KW"/>
</dbReference>
<dbReference type="GO" id="GO:0004707">
    <property type="term" value="F:MAP kinase activity"/>
    <property type="evidence" value="ECO:0007669"/>
    <property type="project" value="UniProtKB-EC"/>
</dbReference>
<dbReference type="GO" id="GO:0106310">
    <property type="term" value="F:protein serine kinase activity"/>
    <property type="evidence" value="ECO:0007669"/>
    <property type="project" value="RHEA"/>
</dbReference>
<dbReference type="GO" id="GO:0051403">
    <property type="term" value="P:stress-activated MAPK cascade"/>
    <property type="evidence" value="ECO:0007669"/>
    <property type="project" value="InterPro"/>
</dbReference>
<dbReference type="CDD" id="cd07856">
    <property type="entry name" value="STKc_Sty1_Hog1"/>
    <property type="match status" value="1"/>
</dbReference>
<dbReference type="FunFam" id="1.10.510.10:FF:000049">
    <property type="entry name" value="Mitogen-activated protein kinase"/>
    <property type="match status" value="1"/>
</dbReference>
<dbReference type="FunFam" id="3.30.200.20:FF:000050">
    <property type="entry name" value="Mitogen-activated protein kinase"/>
    <property type="match status" value="1"/>
</dbReference>
<dbReference type="Gene3D" id="3.30.200.20">
    <property type="entry name" value="Phosphorylase Kinase, domain 1"/>
    <property type="match status" value="1"/>
</dbReference>
<dbReference type="Gene3D" id="1.10.510.10">
    <property type="entry name" value="Transferase(Phosphotransferase) domain 1"/>
    <property type="match status" value="1"/>
</dbReference>
<dbReference type="InterPro" id="IPR011009">
    <property type="entry name" value="Kinase-like_dom_sf"/>
</dbReference>
<dbReference type="InterPro" id="IPR050117">
    <property type="entry name" value="MAP_kinase"/>
</dbReference>
<dbReference type="InterPro" id="IPR003527">
    <property type="entry name" value="MAP_kinase_CS"/>
</dbReference>
<dbReference type="InterPro" id="IPR008352">
    <property type="entry name" value="MAPK_p38-like"/>
</dbReference>
<dbReference type="InterPro" id="IPR038783">
    <property type="entry name" value="MAPK_Sty1/Hog1"/>
</dbReference>
<dbReference type="InterPro" id="IPR000719">
    <property type="entry name" value="Prot_kinase_dom"/>
</dbReference>
<dbReference type="InterPro" id="IPR017441">
    <property type="entry name" value="Protein_kinase_ATP_BS"/>
</dbReference>
<dbReference type="InterPro" id="IPR008271">
    <property type="entry name" value="Ser/Thr_kinase_AS"/>
</dbReference>
<dbReference type="PANTHER" id="PTHR24055">
    <property type="entry name" value="MITOGEN-ACTIVATED PROTEIN KINASE"/>
    <property type="match status" value="1"/>
</dbReference>
<dbReference type="Pfam" id="PF00069">
    <property type="entry name" value="Pkinase"/>
    <property type="match status" value="1"/>
</dbReference>
<dbReference type="PRINTS" id="PR01773">
    <property type="entry name" value="P38MAPKINASE"/>
</dbReference>
<dbReference type="SMART" id="SM00220">
    <property type="entry name" value="S_TKc"/>
    <property type="match status" value="1"/>
</dbReference>
<dbReference type="SUPFAM" id="SSF56112">
    <property type="entry name" value="Protein kinase-like (PK-like)"/>
    <property type="match status" value="1"/>
</dbReference>
<dbReference type="PROSITE" id="PS01351">
    <property type="entry name" value="MAPK"/>
    <property type="match status" value="1"/>
</dbReference>
<dbReference type="PROSITE" id="PS00107">
    <property type="entry name" value="PROTEIN_KINASE_ATP"/>
    <property type="match status" value="1"/>
</dbReference>
<dbReference type="PROSITE" id="PS50011">
    <property type="entry name" value="PROTEIN_KINASE_DOM"/>
    <property type="match status" value="1"/>
</dbReference>
<dbReference type="PROSITE" id="PS00108">
    <property type="entry name" value="PROTEIN_KINASE_ST"/>
    <property type="match status" value="1"/>
</dbReference>
<name>HOG1_COLOR</name>
<evidence type="ECO:0000250" key="1"/>
<evidence type="ECO:0000250" key="2">
    <source>
        <dbReference type="UniProtKB" id="P32485"/>
    </source>
</evidence>
<evidence type="ECO:0000250" key="3">
    <source>
        <dbReference type="UniProtKB" id="Q16539"/>
    </source>
</evidence>
<evidence type="ECO:0000250" key="4">
    <source>
        <dbReference type="UniProtKB" id="Q4WSF6"/>
    </source>
</evidence>
<evidence type="ECO:0000255" key="5">
    <source>
        <dbReference type="PROSITE-ProRule" id="PRU00159"/>
    </source>
</evidence>
<evidence type="ECO:0000255" key="6">
    <source>
        <dbReference type="PROSITE-ProRule" id="PRU10027"/>
    </source>
</evidence>
<evidence type="ECO:0000305" key="7"/>
<accession>Q75Q66</accession>
<accession>A0A484G6G5</accession>
<accession>N4VA17</accession>
<gene>
    <name type="primary">HOG1</name>
    <name type="synonym">OSC1</name>
    <name type="ORF">Cob_10548</name>
    <name type="ORF">Cob_v000877</name>
</gene>
<feature type="chain" id="PRO_0000289692" description="Mitogen-activated protein kinase HOG1">
    <location>
        <begin position="1"/>
        <end position="357"/>
    </location>
</feature>
<feature type="domain" description="Protein kinase" evidence="5">
    <location>
        <begin position="20"/>
        <end position="299"/>
    </location>
</feature>
<feature type="short sequence motif" description="TXY">
    <location>
        <begin position="171"/>
        <end position="173"/>
    </location>
</feature>
<feature type="active site" description="Proton acceptor" evidence="5 6">
    <location>
        <position position="141"/>
    </location>
</feature>
<feature type="binding site" evidence="5">
    <location>
        <begin position="26"/>
        <end position="34"/>
    </location>
    <ligand>
        <name>ATP</name>
        <dbReference type="ChEBI" id="CHEBI:30616"/>
    </ligand>
</feature>
<feature type="binding site" evidence="5">
    <location>
        <position position="49"/>
    </location>
    <ligand>
        <name>ATP</name>
        <dbReference type="ChEBI" id="CHEBI:30616"/>
    </ligand>
</feature>
<feature type="modified residue" description="Phosphothreonine" evidence="1">
    <location>
        <position position="171"/>
    </location>
</feature>
<feature type="modified residue" description="Phosphotyrosine" evidence="1">
    <location>
        <position position="173"/>
    </location>
</feature>
<organism>
    <name type="scientific">Colletotrichum orbiculare (strain 104-T / ATCC 96160 / CBS 514.97 / LARS 414 / MAFF 240422)</name>
    <name type="common">Cucumber anthracnose fungus</name>
    <name type="synonym">Colletotrichum lagenarium</name>
    <dbReference type="NCBI Taxonomy" id="1213857"/>
    <lineage>
        <taxon>Eukaryota</taxon>
        <taxon>Fungi</taxon>
        <taxon>Dikarya</taxon>
        <taxon>Ascomycota</taxon>
        <taxon>Pezizomycotina</taxon>
        <taxon>Sordariomycetes</taxon>
        <taxon>Hypocreomycetidae</taxon>
        <taxon>Glomerellales</taxon>
        <taxon>Glomerellaceae</taxon>
        <taxon>Colletotrichum</taxon>
        <taxon>Colletotrichum orbiculare species complex</taxon>
    </lineage>
</organism>
<comment type="function">
    <text evidence="4">Proline-directed serine/threonine-protein kinase involved in a signal transduction pathway that is activated by changes in the osmolarity of the extracellular environment. Controls osmotic regulation of transcription of target genes.</text>
</comment>
<comment type="catalytic activity">
    <reaction evidence="2">
        <text>L-seryl-[protein] + ATP = O-phospho-L-seryl-[protein] + ADP + H(+)</text>
        <dbReference type="Rhea" id="RHEA:17989"/>
        <dbReference type="Rhea" id="RHEA-COMP:9863"/>
        <dbReference type="Rhea" id="RHEA-COMP:11604"/>
        <dbReference type="ChEBI" id="CHEBI:15378"/>
        <dbReference type="ChEBI" id="CHEBI:29999"/>
        <dbReference type="ChEBI" id="CHEBI:30616"/>
        <dbReference type="ChEBI" id="CHEBI:83421"/>
        <dbReference type="ChEBI" id="CHEBI:456216"/>
        <dbReference type="EC" id="2.7.11.24"/>
    </reaction>
    <physiologicalReaction direction="left-to-right" evidence="2">
        <dbReference type="Rhea" id="RHEA:17990"/>
    </physiologicalReaction>
</comment>
<comment type="catalytic activity">
    <reaction evidence="2">
        <text>L-threonyl-[protein] + ATP = O-phospho-L-threonyl-[protein] + ADP + H(+)</text>
        <dbReference type="Rhea" id="RHEA:46608"/>
        <dbReference type="Rhea" id="RHEA-COMP:11060"/>
        <dbReference type="Rhea" id="RHEA-COMP:11605"/>
        <dbReference type="ChEBI" id="CHEBI:15378"/>
        <dbReference type="ChEBI" id="CHEBI:30013"/>
        <dbReference type="ChEBI" id="CHEBI:30616"/>
        <dbReference type="ChEBI" id="CHEBI:61977"/>
        <dbReference type="ChEBI" id="CHEBI:456216"/>
        <dbReference type="EC" id="2.7.11.24"/>
    </reaction>
    <physiologicalReaction direction="left-to-right" evidence="2">
        <dbReference type="Rhea" id="RHEA:46609"/>
    </physiologicalReaction>
</comment>
<comment type="cofactor">
    <cofactor evidence="3">
        <name>Mg(2+)</name>
        <dbReference type="ChEBI" id="CHEBI:18420"/>
    </cofactor>
</comment>
<comment type="activity regulation">
    <text evidence="1">Activated by tyrosine and threonine phosphorylation.</text>
</comment>
<comment type="subcellular location">
    <subcellularLocation>
        <location evidence="1">Cytoplasm</location>
    </subcellularLocation>
    <subcellularLocation>
        <location evidence="1">Nucleus</location>
    </subcellularLocation>
</comment>
<comment type="domain">
    <text>The TXY motif contains the threonine and tyrosine residues whose phosphorylation activates the MAP kinases.</text>
</comment>
<comment type="PTM">
    <text evidence="1">Dually phosphorylated on Thr-171 and Tyr-173, which activates the enzyme.</text>
</comment>
<comment type="similarity">
    <text evidence="5">Belongs to the protein kinase superfamily. Ser/Thr protein kinase family. MAP kinase subfamily. HOG1 sub-subfamily.</text>
</comment>
<comment type="sequence caution" evidence="7">
    <conflict type="erroneous gene model prediction">
        <sequence resource="EMBL-CDS" id="ENH80487"/>
    </conflict>
</comment>
<keyword id="KW-0010">Activator</keyword>
<keyword id="KW-0067">ATP-binding</keyword>
<keyword id="KW-0963">Cytoplasm</keyword>
<keyword id="KW-0418">Kinase</keyword>
<keyword id="KW-0547">Nucleotide-binding</keyword>
<keyword id="KW-0539">Nucleus</keyword>
<keyword id="KW-0597">Phosphoprotein</keyword>
<keyword id="KW-1185">Reference proteome</keyword>
<keyword id="KW-0723">Serine/threonine-protein kinase</keyword>
<keyword id="KW-0804">Transcription</keyword>
<keyword id="KW-0805">Transcription regulation</keyword>
<keyword id="KW-0808">Transferase</keyword>
<sequence>MAEFIRAQIFGTTFEITSRYSDLQPVGMGAFGLVCSARDQLTNQNVAVKKIMKPFSTPVLAKRTYRELKLLKHLRHENVISLSDIFISPLEDIYFVTELLGTDLHRLLTSRPLEKQFIQYFLYQIMRGLKYVHSAGVVHRDLKPSNILVNENCDLKICDFGLARIQDPQMTGYVSTRYYRAPEIMLTWQKYDVEVDIWSAGCIFAEMLEGKPLFPGKDHVNQFSIITELLGTPPDDVINTIASENTLRFVKSLPKRERQPLKNKFKNADPSAIDLLERMLVFDPKKRITATEALSHDYLAPYHDPTDEPVAEEKFDWSFNDADLPVDTWKIMMYSEILDYHNVDASAQQIEEQFNGQ</sequence>
<reference key="1">
    <citation type="journal article" date="2004" name="Mol. Microbiol.">
        <title>Fungicide activity through activation of a fungal signalling pathway.</title>
        <authorList>
            <person name="Kojima K."/>
            <person name="Takano Y."/>
            <person name="Yoshimi A."/>
            <person name="Tanaka C."/>
            <person name="Kikuchi T."/>
            <person name="Okuno T."/>
        </authorList>
    </citation>
    <scope>NUCLEOTIDE SEQUENCE [GENOMIC DNA]</scope>
    <source>
        <strain>104-T / ATCC 96160 / CBS 514.97 / LARS 414 / MAFF 240422</strain>
    </source>
</reference>
<reference key="2">
    <citation type="journal article" date="2013" name="New Phytol.">
        <title>Comparative genomic and transcriptomic analyses reveal the hemibiotrophic stage shift of Colletotrichum fungi.</title>
        <authorList>
            <person name="Gan P."/>
            <person name="Ikeda K."/>
            <person name="Irieda H."/>
            <person name="Narusaka M."/>
            <person name="O'Connell R.J."/>
            <person name="Narusaka Y."/>
            <person name="Takano Y."/>
            <person name="Kubo Y."/>
            <person name="Shirasu K."/>
        </authorList>
    </citation>
    <scope>NUCLEOTIDE SEQUENCE [LARGE SCALE GENOMIC DNA]</scope>
    <source>
        <strain>104-T / ATCC 96160 / CBS 514.97 / LARS 414 / MAFF 240422</strain>
    </source>
</reference>
<reference key="3">
    <citation type="journal article" date="2019" name="Mol. Plant Microbe Interact.">
        <title>Genome sequence resources for four phytopathogenic fungi from the Colletotrichum orbiculare species complex.</title>
        <authorList>
            <person name="Gan P."/>
            <person name="Tsushima A."/>
            <person name="Narusaka M."/>
            <person name="Narusaka Y."/>
            <person name="Takano Y."/>
            <person name="Kubo Y."/>
            <person name="Shirasu K."/>
        </authorList>
    </citation>
    <scope>GENOME REANNOTATION</scope>
    <source>
        <strain>104-T / ATCC 96160 / CBS 514.97 / LARS 414 / MAFF 240422</strain>
    </source>
</reference>